<keyword id="KW-0175">Coiled coil</keyword>
<keyword id="KW-0229">DNA integration</keyword>
<keyword id="KW-0233">DNA recombination</keyword>
<keyword id="KW-0238">DNA-binding</keyword>
<keyword id="KW-1185">Reference proteome</keyword>
<proteinExistence type="inferred from homology"/>
<comment type="function">
    <text>Putative site-specific recombinase having a very important role in sporulation. It probably plays a role in the recombination of SpoIIIC and SpoIVCB to form sigma K factor.</text>
</comment>
<comment type="similarity">
    <text evidence="4">In the N-terminal section; belongs to the site-specific recombinase resolvase family.</text>
</comment>
<evidence type="ECO:0000255" key="1"/>
<evidence type="ECO:0000255" key="2">
    <source>
        <dbReference type="PROSITE-ProRule" id="PRU01072"/>
    </source>
</evidence>
<evidence type="ECO:0000255" key="3">
    <source>
        <dbReference type="PROSITE-ProRule" id="PRU01073"/>
    </source>
</evidence>
<evidence type="ECO:0000305" key="4"/>
<dbReference type="EMBL" id="M29040">
    <property type="protein sequence ID" value="AAA22314.1"/>
    <property type="molecule type" value="Genomic_DNA"/>
</dbReference>
<dbReference type="EMBL" id="D32216">
    <property type="protein sequence ID" value="BAA06971.1"/>
    <property type="molecule type" value="Genomic_DNA"/>
</dbReference>
<dbReference type="EMBL" id="D84432">
    <property type="protein sequence ID" value="BAA12435.1"/>
    <property type="molecule type" value="Genomic_DNA"/>
</dbReference>
<dbReference type="EMBL" id="AL009126">
    <property type="protein sequence ID" value="CAB14518.2"/>
    <property type="molecule type" value="Genomic_DNA"/>
</dbReference>
<dbReference type="PIR" id="A43656">
    <property type="entry name" value="A43656"/>
</dbReference>
<dbReference type="RefSeq" id="NP_390454.2">
    <property type="nucleotide sequence ID" value="NC_000964.3"/>
</dbReference>
<dbReference type="RefSeq" id="WP_010886573.1">
    <property type="nucleotide sequence ID" value="NC_000964.3"/>
</dbReference>
<dbReference type="SMR" id="P17867"/>
<dbReference type="IntAct" id="P17867">
    <property type="interactions" value="6"/>
</dbReference>
<dbReference type="STRING" id="224308.BSU25770"/>
<dbReference type="PaxDb" id="224308-BSU25770"/>
<dbReference type="DNASU" id="937799"/>
<dbReference type="EnsemblBacteria" id="CAB14518">
    <property type="protein sequence ID" value="CAB14518"/>
    <property type="gene ID" value="BSU_25770"/>
</dbReference>
<dbReference type="GeneID" id="937799"/>
<dbReference type="KEGG" id="bsu:BSU25770"/>
<dbReference type="PATRIC" id="fig|224308.179.peg.2801"/>
<dbReference type="eggNOG" id="COG1961">
    <property type="taxonomic scope" value="Bacteria"/>
</dbReference>
<dbReference type="InParanoid" id="P17867"/>
<dbReference type="OrthoDB" id="9811097at2"/>
<dbReference type="PhylomeDB" id="P17867"/>
<dbReference type="BioCyc" id="BSUB:BSU25770-MONOMER"/>
<dbReference type="Proteomes" id="UP000001570">
    <property type="component" value="Chromosome"/>
</dbReference>
<dbReference type="GO" id="GO:0003677">
    <property type="term" value="F:DNA binding"/>
    <property type="evidence" value="ECO:0007669"/>
    <property type="project" value="UniProtKB-KW"/>
</dbReference>
<dbReference type="GO" id="GO:0000150">
    <property type="term" value="F:DNA strand exchange activity"/>
    <property type="evidence" value="ECO:0000318"/>
    <property type="project" value="GO_Central"/>
</dbReference>
<dbReference type="GO" id="GO:0015074">
    <property type="term" value="P:DNA integration"/>
    <property type="evidence" value="ECO:0007669"/>
    <property type="project" value="UniProtKB-KW"/>
</dbReference>
<dbReference type="GO" id="GO:0006310">
    <property type="term" value="P:DNA recombination"/>
    <property type="evidence" value="ECO:0000318"/>
    <property type="project" value="GO_Central"/>
</dbReference>
<dbReference type="CDD" id="cd00338">
    <property type="entry name" value="Ser_Recombinase"/>
    <property type="match status" value="1"/>
</dbReference>
<dbReference type="Gene3D" id="3.90.1750.20">
    <property type="entry name" value="Putative Large Serine Recombinase, Chain B, Domain 2"/>
    <property type="match status" value="1"/>
</dbReference>
<dbReference type="Gene3D" id="3.40.50.1390">
    <property type="entry name" value="Resolvase, N-terminal catalytic domain"/>
    <property type="match status" value="1"/>
</dbReference>
<dbReference type="InterPro" id="IPR038109">
    <property type="entry name" value="DNA_bind_recomb_sf"/>
</dbReference>
<dbReference type="InterPro" id="IPR011109">
    <property type="entry name" value="DNA_bind_recombinase_dom"/>
</dbReference>
<dbReference type="InterPro" id="IPR006118">
    <property type="entry name" value="Recombinase_CS"/>
</dbReference>
<dbReference type="InterPro" id="IPR006119">
    <property type="entry name" value="Resolv_N"/>
</dbReference>
<dbReference type="InterPro" id="IPR036162">
    <property type="entry name" value="Resolvase-like_N_sf"/>
</dbReference>
<dbReference type="InterPro" id="IPR050639">
    <property type="entry name" value="SSR_resolvase"/>
</dbReference>
<dbReference type="InterPro" id="IPR025827">
    <property type="entry name" value="Zn_ribbon_recom_dom"/>
</dbReference>
<dbReference type="PANTHER" id="PTHR30461:SF23">
    <property type="entry name" value="DNA RECOMBINASE-RELATED"/>
    <property type="match status" value="1"/>
</dbReference>
<dbReference type="PANTHER" id="PTHR30461">
    <property type="entry name" value="DNA-INVERTASE FROM LAMBDOID PROPHAGE"/>
    <property type="match status" value="1"/>
</dbReference>
<dbReference type="Pfam" id="PF07508">
    <property type="entry name" value="Recombinase"/>
    <property type="match status" value="1"/>
</dbReference>
<dbReference type="Pfam" id="PF00239">
    <property type="entry name" value="Resolvase"/>
    <property type="match status" value="1"/>
</dbReference>
<dbReference type="Pfam" id="PF13408">
    <property type="entry name" value="Zn_ribbon_recom"/>
    <property type="match status" value="1"/>
</dbReference>
<dbReference type="SMART" id="SM00857">
    <property type="entry name" value="Resolvase"/>
    <property type="match status" value="1"/>
</dbReference>
<dbReference type="SUPFAM" id="SSF53041">
    <property type="entry name" value="Resolvase-like"/>
    <property type="match status" value="1"/>
</dbReference>
<dbReference type="PROSITE" id="PS51737">
    <property type="entry name" value="RECOMBINASE_DNA_BIND"/>
    <property type="match status" value="1"/>
</dbReference>
<dbReference type="PROSITE" id="PS00397">
    <property type="entry name" value="RECOMBINASES_1"/>
    <property type="match status" value="1"/>
</dbReference>
<dbReference type="PROSITE" id="PS51736">
    <property type="entry name" value="RECOMBINASES_3"/>
    <property type="match status" value="1"/>
</dbReference>
<organism>
    <name type="scientific">Bacillus subtilis (strain 168)</name>
    <dbReference type="NCBI Taxonomy" id="224308"/>
    <lineage>
        <taxon>Bacteria</taxon>
        <taxon>Bacillati</taxon>
        <taxon>Bacillota</taxon>
        <taxon>Bacilli</taxon>
        <taxon>Bacillales</taxon>
        <taxon>Bacillaceae</taxon>
        <taxon>Bacillus</taxon>
    </lineage>
</organism>
<accession>P17867</accession>
<reference key="1">
    <citation type="journal article" date="1990" name="J. Bacteriol.">
        <title>The cisA cistron of Bacillus subtilis sporulation gene spoIVC encodes a protein homologous to a site-specific recombinase.</title>
        <authorList>
            <person name="Sato T."/>
            <person name="Samori Y."/>
            <person name="Kobayashi Y."/>
        </authorList>
    </citation>
    <scope>NUCLEOTIDE SEQUENCE [GENOMIC DNA]</scope>
</reference>
<reference key="2">
    <citation type="journal article" date="1995" name="Microbiology">
        <title>Complete nucleotide sequence of a skin element excised by DNA rearrangement during sporulation in Bacillus subtilis.</title>
        <authorList>
            <person name="Takemaru K."/>
            <person name="Mizuno M."/>
            <person name="Sato T."/>
            <person name="Takeuchi M."/>
            <person name="Kobayashi Y."/>
        </authorList>
    </citation>
    <scope>NUCLEOTIDE SEQUENCE [GENOMIC DNA]</scope>
    <source>
        <strain>168 / JH642</strain>
    </source>
</reference>
<reference key="3">
    <citation type="journal article" date="1996" name="Microbiology">
        <title>Systematic sequencing of the 283 kb 210 degrees-232 degrees region of the Bacillus subtilis genome containing the skin element and many sporulation genes.</title>
        <authorList>
            <person name="Mizuno M."/>
            <person name="Masuda S."/>
            <person name="Takemaru K."/>
            <person name="Hosono S."/>
            <person name="Sato T."/>
            <person name="Takeuchi M."/>
            <person name="Kobayashi Y."/>
        </authorList>
    </citation>
    <scope>NUCLEOTIDE SEQUENCE [GENOMIC DNA]</scope>
    <source>
        <strain>168 / JH642</strain>
    </source>
</reference>
<reference key="4">
    <citation type="journal article" date="1997" name="Nature">
        <title>The complete genome sequence of the Gram-positive bacterium Bacillus subtilis.</title>
        <authorList>
            <person name="Kunst F."/>
            <person name="Ogasawara N."/>
            <person name="Moszer I."/>
            <person name="Albertini A.M."/>
            <person name="Alloni G."/>
            <person name="Azevedo V."/>
            <person name="Bertero M.G."/>
            <person name="Bessieres P."/>
            <person name="Bolotin A."/>
            <person name="Borchert S."/>
            <person name="Borriss R."/>
            <person name="Boursier L."/>
            <person name="Brans A."/>
            <person name="Braun M."/>
            <person name="Brignell S.C."/>
            <person name="Bron S."/>
            <person name="Brouillet S."/>
            <person name="Bruschi C.V."/>
            <person name="Caldwell B."/>
            <person name="Capuano V."/>
            <person name="Carter N.M."/>
            <person name="Choi S.-K."/>
            <person name="Codani J.-J."/>
            <person name="Connerton I.F."/>
            <person name="Cummings N.J."/>
            <person name="Daniel R.A."/>
            <person name="Denizot F."/>
            <person name="Devine K.M."/>
            <person name="Duesterhoeft A."/>
            <person name="Ehrlich S.D."/>
            <person name="Emmerson P.T."/>
            <person name="Entian K.-D."/>
            <person name="Errington J."/>
            <person name="Fabret C."/>
            <person name="Ferrari E."/>
            <person name="Foulger D."/>
            <person name="Fritz C."/>
            <person name="Fujita M."/>
            <person name="Fujita Y."/>
            <person name="Fuma S."/>
            <person name="Galizzi A."/>
            <person name="Galleron N."/>
            <person name="Ghim S.-Y."/>
            <person name="Glaser P."/>
            <person name="Goffeau A."/>
            <person name="Golightly E.J."/>
            <person name="Grandi G."/>
            <person name="Guiseppi G."/>
            <person name="Guy B.J."/>
            <person name="Haga K."/>
            <person name="Haiech J."/>
            <person name="Harwood C.R."/>
            <person name="Henaut A."/>
            <person name="Hilbert H."/>
            <person name="Holsappel S."/>
            <person name="Hosono S."/>
            <person name="Hullo M.-F."/>
            <person name="Itaya M."/>
            <person name="Jones L.-M."/>
            <person name="Joris B."/>
            <person name="Karamata D."/>
            <person name="Kasahara Y."/>
            <person name="Klaerr-Blanchard M."/>
            <person name="Klein C."/>
            <person name="Kobayashi Y."/>
            <person name="Koetter P."/>
            <person name="Koningstein G."/>
            <person name="Krogh S."/>
            <person name="Kumano M."/>
            <person name="Kurita K."/>
            <person name="Lapidus A."/>
            <person name="Lardinois S."/>
            <person name="Lauber J."/>
            <person name="Lazarevic V."/>
            <person name="Lee S.-M."/>
            <person name="Levine A."/>
            <person name="Liu H."/>
            <person name="Masuda S."/>
            <person name="Mauel C."/>
            <person name="Medigue C."/>
            <person name="Medina N."/>
            <person name="Mellado R.P."/>
            <person name="Mizuno M."/>
            <person name="Moestl D."/>
            <person name="Nakai S."/>
            <person name="Noback M."/>
            <person name="Noone D."/>
            <person name="O'Reilly M."/>
            <person name="Ogawa K."/>
            <person name="Ogiwara A."/>
            <person name="Oudega B."/>
            <person name="Park S.-H."/>
            <person name="Parro V."/>
            <person name="Pohl T.M."/>
            <person name="Portetelle D."/>
            <person name="Porwollik S."/>
            <person name="Prescott A.M."/>
            <person name="Presecan E."/>
            <person name="Pujic P."/>
            <person name="Purnelle B."/>
            <person name="Rapoport G."/>
            <person name="Rey M."/>
            <person name="Reynolds S."/>
            <person name="Rieger M."/>
            <person name="Rivolta C."/>
            <person name="Rocha E."/>
            <person name="Roche B."/>
            <person name="Rose M."/>
            <person name="Sadaie Y."/>
            <person name="Sato T."/>
            <person name="Scanlan E."/>
            <person name="Schleich S."/>
            <person name="Schroeter R."/>
            <person name="Scoffone F."/>
            <person name="Sekiguchi J."/>
            <person name="Sekowska A."/>
            <person name="Seror S.J."/>
            <person name="Serror P."/>
            <person name="Shin B.-S."/>
            <person name="Soldo B."/>
            <person name="Sorokin A."/>
            <person name="Tacconi E."/>
            <person name="Takagi T."/>
            <person name="Takahashi H."/>
            <person name="Takemaru K."/>
            <person name="Takeuchi M."/>
            <person name="Tamakoshi A."/>
            <person name="Tanaka T."/>
            <person name="Terpstra P."/>
            <person name="Tognoni A."/>
            <person name="Tosato V."/>
            <person name="Uchiyama S."/>
            <person name="Vandenbol M."/>
            <person name="Vannier F."/>
            <person name="Vassarotti A."/>
            <person name="Viari A."/>
            <person name="Wambutt R."/>
            <person name="Wedler E."/>
            <person name="Wedler H."/>
            <person name="Weitzenegger T."/>
            <person name="Winters P."/>
            <person name="Wipat A."/>
            <person name="Yamamoto H."/>
            <person name="Yamane K."/>
            <person name="Yasumoto K."/>
            <person name="Yata K."/>
            <person name="Yoshida K."/>
            <person name="Yoshikawa H.-F."/>
            <person name="Zumstein E."/>
            <person name="Yoshikawa H."/>
            <person name="Danchin A."/>
        </authorList>
    </citation>
    <scope>NUCLEOTIDE SEQUENCE [LARGE SCALE GENOMIC DNA]</scope>
    <source>
        <strain>168</strain>
    </source>
</reference>
<reference key="5">
    <citation type="journal article" date="2009" name="Microbiology">
        <title>From a consortium sequence to a unified sequence: the Bacillus subtilis 168 reference genome a decade later.</title>
        <authorList>
            <person name="Barbe V."/>
            <person name="Cruveiller S."/>
            <person name="Kunst F."/>
            <person name="Lenoble P."/>
            <person name="Meurice G."/>
            <person name="Sekowska A."/>
            <person name="Vallenet D."/>
            <person name="Wang T."/>
            <person name="Moszer I."/>
            <person name="Medigue C."/>
            <person name="Danchin A."/>
        </authorList>
    </citation>
    <scope>SEQUENCE REVISION TO 438</scope>
</reference>
<name>CISA_BACSU</name>
<sequence>MIAIYVRVSTEEQAIKGSSIDSQIEACIKKAGTKDVLKYADEGFSGELLERPALNRLREDASKGLISQVICYDPDRLSRKLMNQLIIDDELRKRNIPLIFVNGEYANSPEGQLFFAMRGAISEFEKAKIKERTSSGRLQKMKKGMIIKDSKLYGYKFVKEKRTLEILEEEAKIIRMIFNYFTDHKSPFFGRVNGIALHLTQMGVKTKKGAKVWHRQVVRQILMNSSYKGEHRQYKYDTEGSYVSKQAGNKSIIKIRPEEEQITVTIPAIVPAEQWDYAQELLGQSKRKHLSISPHNYLLSGLVRCGKCGNTMTGKKRKSHGKDYYVYTCRKNYSGAKDRGCGKEMSENKLNRHVWGEIFKFITNPQKYVSFKEAEQSNHLSDELELIEKEIEKTKKGRKRLLTLISLSDDDDLDIDEIKAQIIELQKKQNQLTEKCNEIQSKMKVLDDTSSSENALKRAIDYFQSIGADNLTLEDKKTIVNFIVKEVTIVDSDTIYIETY</sequence>
<gene>
    <name type="primary">cisA</name>
    <name type="synonym">spoIVCA</name>
    <name type="ordered locus">BSU25770</name>
</gene>
<feature type="chain" id="PRO_0000196383" description="Putative DNA recombinase">
    <location>
        <begin position="1"/>
        <end position="500"/>
    </location>
</feature>
<feature type="domain" description="Resolvase/invertase-type recombinase catalytic" evidence="2">
    <location>
        <begin position="1"/>
        <end position="144"/>
    </location>
</feature>
<feature type="DNA-binding region" description="Recombinase" evidence="3">
    <location>
        <begin position="152"/>
        <end position="288"/>
    </location>
</feature>
<feature type="coiled-coil region" evidence="1">
    <location>
        <begin position="372"/>
        <end position="448"/>
    </location>
</feature>
<feature type="active site" description="O-(5'-phospho-DNA)-serine intermediate" evidence="2">
    <location>
        <position position="9"/>
    </location>
</feature>
<feature type="sequence conflict" description="In Ref. 1; AAA22314, 2; BAA06971 and 3; BAA12435." evidence="4" ref="1 2 3">
    <original>E</original>
    <variation>R</variation>
    <location>
        <position position="438"/>
    </location>
</feature>
<protein>
    <recommendedName>
        <fullName>Putative DNA recombinase</fullName>
    </recommendedName>
    <alternativeName>
        <fullName>Stage IV sporulation protein CA</fullName>
    </alternativeName>
</protein>